<name>ASTB_YERPB</name>
<gene>
    <name evidence="1" type="primary">astB</name>
    <name type="ordered locus">YPTS_2014</name>
</gene>
<reference key="1">
    <citation type="submission" date="2008-04" db="EMBL/GenBank/DDBJ databases">
        <title>Complete sequence of Yersinia pseudotuberculosis PB1/+.</title>
        <authorList>
            <person name="Copeland A."/>
            <person name="Lucas S."/>
            <person name="Lapidus A."/>
            <person name="Glavina del Rio T."/>
            <person name="Dalin E."/>
            <person name="Tice H."/>
            <person name="Bruce D."/>
            <person name="Goodwin L."/>
            <person name="Pitluck S."/>
            <person name="Munk A.C."/>
            <person name="Brettin T."/>
            <person name="Detter J.C."/>
            <person name="Han C."/>
            <person name="Tapia R."/>
            <person name="Schmutz J."/>
            <person name="Larimer F."/>
            <person name="Land M."/>
            <person name="Hauser L."/>
            <person name="Challacombe J.F."/>
            <person name="Green L."/>
            <person name="Lindler L.E."/>
            <person name="Nikolich M.P."/>
            <person name="Richardson P."/>
        </authorList>
    </citation>
    <scope>NUCLEOTIDE SEQUENCE [LARGE SCALE GENOMIC DNA]</scope>
    <source>
        <strain>PB1/+</strain>
    </source>
</reference>
<proteinExistence type="inferred from homology"/>
<organism>
    <name type="scientific">Yersinia pseudotuberculosis serotype IB (strain PB1/+)</name>
    <dbReference type="NCBI Taxonomy" id="502801"/>
    <lineage>
        <taxon>Bacteria</taxon>
        <taxon>Pseudomonadati</taxon>
        <taxon>Pseudomonadota</taxon>
        <taxon>Gammaproteobacteria</taxon>
        <taxon>Enterobacterales</taxon>
        <taxon>Yersiniaceae</taxon>
        <taxon>Yersinia</taxon>
    </lineage>
</organism>
<dbReference type="EC" id="3.5.3.23" evidence="1"/>
<dbReference type="EMBL" id="CP001048">
    <property type="protein sequence ID" value="ACC88980.1"/>
    <property type="molecule type" value="Genomic_DNA"/>
</dbReference>
<dbReference type="RefSeq" id="WP_002212029.1">
    <property type="nucleotide sequence ID" value="NZ_CP009780.1"/>
</dbReference>
<dbReference type="SMR" id="B2K297"/>
<dbReference type="GeneID" id="49786049"/>
<dbReference type="KEGG" id="ypb:YPTS_2014"/>
<dbReference type="PATRIC" id="fig|502801.10.peg.1400"/>
<dbReference type="UniPathway" id="UPA00185">
    <property type="reaction ID" value="UER00280"/>
</dbReference>
<dbReference type="GO" id="GO:0009015">
    <property type="term" value="F:N-succinylarginine dihydrolase activity"/>
    <property type="evidence" value="ECO:0007669"/>
    <property type="project" value="UniProtKB-UniRule"/>
</dbReference>
<dbReference type="GO" id="GO:0019544">
    <property type="term" value="P:arginine catabolic process to glutamate"/>
    <property type="evidence" value="ECO:0007669"/>
    <property type="project" value="UniProtKB-UniRule"/>
</dbReference>
<dbReference type="GO" id="GO:0019545">
    <property type="term" value="P:arginine catabolic process to succinate"/>
    <property type="evidence" value="ECO:0007669"/>
    <property type="project" value="UniProtKB-UniRule"/>
</dbReference>
<dbReference type="Gene3D" id="3.75.10.20">
    <property type="entry name" value="Succinylarginine dihydrolase"/>
    <property type="match status" value="1"/>
</dbReference>
<dbReference type="HAMAP" id="MF_01172">
    <property type="entry name" value="AstB"/>
    <property type="match status" value="1"/>
</dbReference>
<dbReference type="InterPro" id="IPR037031">
    <property type="entry name" value="AstB_sf"/>
</dbReference>
<dbReference type="InterPro" id="IPR007079">
    <property type="entry name" value="SuccinylArg_d-Hdrlase_AstB"/>
</dbReference>
<dbReference type="NCBIfam" id="TIGR03241">
    <property type="entry name" value="arg_catab_astB"/>
    <property type="match status" value="1"/>
</dbReference>
<dbReference type="NCBIfam" id="NF009789">
    <property type="entry name" value="PRK13281.1"/>
    <property type="match status" value="1"/>
</dbReference>
<dbReference type="PANTHER" id="PTHR30420">
    <property type="entry name" value="N-SUCCINYLARGININE DIHYDROLASE"/>
    <property type="match status" value="1"/>
</dbReference>
<dbReference type="PANTHER" id="PTHR30420:SF2">
    <property type="entry name" value="N-SUCCINYLARGININE DIHYDROLASE"/>
    <property type="match status" value="1"/>
</dbReference>
<dbReference type="Pfam" id="PF04996">
    <property type="entry name" value="AstB"/>
    <property type="match status" value="1"/>
</dbReference>
<dbReference type="SUPFAM" id="SSF55909">
    <property type="entry name" value="Pentein"/>
    <property type="match status" value="1"/>
</dbReference>
<sequence length="447" mass="49234">MAGYEVNFDGLVGLTHHYAGLSFGNEASTTHQNRTSNPRLAAKQGLLKMKALADLGYKQGVLPPQERPAIGVLRKLGFSGSDEQVLSDVARNAPRLLSAVSSASSMWTANAATVSPSADSADGRVHFTVANLHNKFHRAIEAETTAVLLPAVFNNHRHFVHHDALPSVTLLGDEGAANHNRLGGEYDSPAIQMFVYGRQGMESGAVPGRYPARQTREASQAVARLHQLDPKRTVFVQQNPAVIDQGVFHNDVIAVSNRNVLFHHELAFLSSTQVMDDIRCKMAGLEQQLVNIEVPEAEVSVADAVSTYLFNSQLLHKANGKMLLVIPQESQDNPSVWRYLSELVSGDGPIDELRVFDLRESMRNGGGPACLRLRVVLNDAELQAVNSRVMLTPALFVTLNNWVDQHYRDHLQFKDLADPHLLQEGRQALDELTRILNLGPVYPFQRN</sequence>
<protein>
    <recommendedName>
        <fullName evidence="1">N-succinylarginine dihydrolase</fullName>
        <ecNumber evidence="1">3.5.3.23</ecNumber>
    </recommendedName>
</protein>
<keyword id="KW-0056">Arginine metabolism</keyword>
<keyword id="KW-0378">Hydrolase</keyword>
<feature type="chain" id="PRO_1000138033" description="N-succinylarginine dihydrolase">
    <location>
        <begin position="1"/>
        <end position="447"/>
    </location>
</feature>
<feature type="active site" evidence="1">
    <location>
        <position position="174"/>
    </location>
</feature>
<feature type="active site" evidence="1">
    <location>
        <position position="249"/>
    </location>
</feature>
<feature type="active site" description="Nucleophile" evidence="1">
    <location>
        <position position="370"/>
    </location>
</feature>
<feature type="binding site" evidence="1">
    <location>
        <begin position="19"/>
        <end position="28"/>
    </location>
    <ligand>
        <name>substrate</name>
    </ligand>
</feature>
<feature type="binding site" evidence="1">
    <location>
        <position position="110"/>
    </location>
    <ligand>
        <name>substrate</name>
    </ligand>
</feature>
<feature type="binding site" evidence="1">
    <location>
        <begin position="137"/>
        <end position="138"/>
    </location>
    <ligand>
        <name>substrate</name>
    </ligand>
</feature>
<feature type="binding site" evidence="1">
    <location>
        <position position="213"/>
    </location>
    <ligand>
        <name>substrate</name>
    </ligand>
</feature>
<feature type="binding site" evidence="1">
    <location>
        <position position="251"/>
    </location>
    <ligand>
        <name>substrate</name>
    </ligand>
</feature>
<feature type="binding site" evidence="1">
    <location>
        <position position="364"/>
    </location>
    <ligand>
        <name>substrate</name>
    </ligand>
</feature>
<evidence type="ECO:0000255" key="1">
    <source>
        <dbReference type="HAMAP-Rule" id="MF_01172"/>
    </source>
</evidence>
<comment type="function">
    <text evidence="1">Catalyzes the hydrolysis of N(2)-succinylarginine into N(2)-succinylornithine, ammonia and CO(2).</text>
</comment>
<comment type="catalytic activity">
    <reaction evidence="1">
        <text>N(2)-succinyl-L-arginine + 2 H2O + 2 H(+) = N(2)-succinyl-L-ornithine + 2 NH4(+) + CO2</text>
        <dbReference type="Rhea" id="RHEA:19533"/>
        <dbReference type="ChEBI" id="CHEBI:15377"/>
        <dbReference type="ChEBI" id="CHEBI:15378"/>
        <dbReference type="ChEBI" id="CHEBI:16526"/>
        <dbReference type="ChEBI" id="CHEBI:28938"/>
        <dbReference type="ChEBI" id="CHEBI:58241"/>
        <dbReference type="ChEBI" id="CHEBI:58514"/>
        <dbReference type="EC" id="3.5.3.23"/>
    </reaction>
</comment>
<comment type="pathway">
    <text evidence="1">Amino-acid degradation; L-arginine degradation via AST pathway; L-glutamate and succinate from L-arginine: step 2/5.</text>
</comment>
<comment type="subunit">
    <text evidence="1">Homodimer.</text>
</comment>
<comment type="similarity">
    <text evidence="1">Belongs to the succinylarginine dihydrolase family.</text>
</comment>
<accession>B2K297</accession>